<proteinExistence type="evidence at protein level"/>
<organism>
    <name type="scientific">Mus musculus</name>
    <name type="common">Mouse</name>
    <dbReference type="NCBI Taxonomy" id="10090"/>
    <lineage>
        <taxon>Eukaryota</taxon>
        <taxon>Metazoa</taxon>
        <taxon>Chordata</taxon>
        <taxon>Craniata</taxon>
        <taxon>Vertebrata</taxon>
        <taxon>Euteleostomi</taxon>
        <taxon>Mammalia</taxon>
        <taxon>Eutheria</taxon>
        <taxon>Euarchontoglires</taxon>
        <taxon>Glires</taxon>
        <taxon>Rodentia</taxon>
        <taxon>Myomorpha</taxon>
        <taxon>Muroidea</taxon>
        <taxon>Muridae</taxon>
        <taxon>Murinae</taxon>
        <taxon>Mus</taxon>
        <taxon>Mus</taxon>
    </lineage>
</organism>
<evidence type="ECO:0000255" key="1">
    <source>
        <dbReference type="PROSITE-ProRule" id="PRU00981"/>
    </source>
</evidence>
<evidence type="ECO:0000256" key="2">
    <source>
        <dbReference type="SAM" id="MobiDB-lite"/>
    </source>
</evidence>
<comment type="function">
    <text>Plays an early essential role in mesoderm formation, as well as a later role in formation of somite-derived chondrogenic lineages.</text>
</comment>
<comment type="subunit">
    <text>Efficient DNA binding requires dimerization with another bHLH protein. Dimerizes and binds the E-box consensus sequence with E12.</text>
</comment>
<comment type="subcellular location">
    <subcellularLocation>
        <location evidence="1">Nucleus</location>
    </subcellularLocation>
</comment>
<comment type="tissue specificity">
    <text>Expressed in mesenchymal precursors of cartilage and in connective tissue. Highly expressed in tendons in the limb, tongue and diaphragm and in cartilage of the bronchi.</text>
</comment>
<comment type="developmental stage">
    <text>At 6.0-6.5 dpc, expressed throughout the egg cylinder with highest expression in the epiblast. At 9.5-10.5 dpc, expressed in the lateral sclerotome and in mesenchymal cells of the limb buds and body wall. At 11.0 dpc, expressed in a metameric pattern extending along the length of the embryo. By 11.5 dpc, expression in the developing vertebrae and invertebral disks is extended caudally. High expression was seen in precursors of the ribs and bones of the limbs. Expression in progenitors of the ribs and the axial and appendicular skeleton becomes down-regulated when ossification is initiated.</text>
</comment>
<reference key="1">
    <citation type="journal article" date="1995" name="Development">
        <title>Scleraxis: a basic helix-loop-helix protein that prefigures skeletal formation during mouse embryogenesis.</title>
        <authorList>
            <person name="Cserjesi P."/>
            <person name="Brown D."/>
            <person name="Ligon K.L."/>
            <person name="Lyons G.E."/>
            <person name="Copeland N.G."/>
            <person name="Gilbert D.J."/>
            <person name="Jenkins N.A."/>
            <person name="Olson E.N."/>
        </authorList>
    </citation>
    <scope>NUCLEOTIDE SEQUENCE [MRNA]</scope>
</reference>
<reference key="2">
    <citation type="journal article" date="1999" name="Development">
        <title>Dual role of the basic helix-loop-helix transcription factor scleraxis in mesoderm formation and chondrogenesis during mouse embryogenesis.</title>
        <authorList>
            <person name="Brown D."/>
            <person name="Wagner D."/>
            <person name="Li X.-Q."/>
            <person name="Richardson J.A."/>
            <person name="Olson E.N."/>
        </authorList>
    </citation>
    <scope>CHARACTERIZATION</scope>
</reference>
<dbReference type="EMBL" id="S78079">
    <property type="protein sequence ID" value="AAB34266.1"/>
    <property type="molecule type" value="mRNA"/>
</dbReference>
<dbReference type="CCDS" id="CCDS27571.1"/>
<dbReference type="RefSeq" id="NP_942588.1">
    <property type="nucleotide sequence ID" value="NM_198885.3"/>
</dbReference>
<dbReference type="SMR" id="Q64124"/>
<dbReference type="BioGRID" id="203115">
    <property type="interactions" value="1"/>
</dbReference>
<dbReference type="FunCoup" id="Q64124">
    <property type="interactions" value="371"/>
</dbReference>
<dbReference type="STRING" id="10090.ENSMUSP00000043668"/>
<dbReference type="iPTMnet" id="Q64124"/>
<dbReference type="PhosphoSitePlus" id="Q64124"/>
<dbReference type="PaxDb" id="10090-ENSMUSP00000043668"/>
<dbReference type="Antibodypedia" id="72507">
    <property type="antibodies" value="86 antibodies from 21 providers"/>
</dbReference>
<dbReference type="DNASU" id="20289"/>
<dbReference type="Ensembl" id="ENSMUST00000043089.9">
    <property type="protein sequence ID" value="ENSMUSP00000043668.8"/>
    <property type="gene ID" value="ENSMUSG00000034161.9"/>
</dbReference>
<dbReference type="GeneID" id="20289"/>
<dbReference type="KEGG" id="mmu:20289"/>
<dbReference type="UCSC" id="uc007wkg.2">
    <property type="organism name" value="mouse"/>
</dbReference>
<dbReference type="AGR" id="MGI:102934"/>
<dbReference type="CTD" id="642658"/>
<dbReference type="MGI" id="MGI:102934">
    <property type="gene designation" value="Scx"/>
</dbReference>
<dbReference type="VEuPathDB" id="HostDB:ENSMUSG00000034161"/>
<dbReference type="eggNOG" id="KOG4029">
    <property type="taxonomic scope" value="Eukaryota"/>
</dbReference>
<dbReference type="GeneTree" id="ENSGT00940000161897"/>
<dbReference type="HOGENOM" id="CLU_115077_0_0_1"/>
<dbReference type="InParanoid" id="Q64124"/>
<dbReference type="OMA" id="FYHHGGG"/>
<dbReference type="PhylomeDB" id="Q64124"/>
<dbReference type="TreeFam" id="TF315153"/>
<dbReference type="BioGRID-ORCS" id="20289">
    <property type="hits" value="5 hits in 79 CRISPR screens"/>
</dbReference>
<dbReference type="PRO" id="PR:Q64124"/>
<dbReference type="Proteomes" id="UP000000589">
    <property type="component" value="Chromosome 15"/>
</dbReference>
<dbReference type="RNAct" id="Q64124">
    <property type="molecule type" value="protein"/>
</dbReference>
<dbReference type="Bgee" id="ENSMUSG00000034161">
    <property type="expression patterns" value="Expressed in facial mesenchyme and 156 other cell types or tissues"/>
</dbReference>
<dbReference type="ExpressionAtlas" id="Q64124">
    <property type="expression patterns" value="baseline and differential"/>
</dbReference>
<dbReference type="GO" id="GO:0005634">
    <property type="term" value="C:nucleus"/>
    <property type="evidence" value="ECO:0000314"/>
    <property type="project" value="UniProtKB"/>
</dbReference>
<dbReference type="GO" id="GO:0005667">
    <property type="term" value="C:transcription regulator complex"/>
    <property type="evidence" value="ECO:0000314"/>
    <property type="project" value="UniProtKB"/>
</dbReference>
<dbReference type="GO" id="GO:0043425">
    <property type="term" value="F:bHLH transcription factor binding"/>
    <property type="evidence" value="ECO:0000353"/>
    <property type="project" value="UniProtKB"/>
</dbReference>
<dbReference type="GO" id="GO:0000987">
    <property type="term" value="F:cis-regulatory region sequence-specific DNA binding"/>
    <property type="evidence" value="ECO:0000314"/>
    <property type="project" value="MGI"/>
</dbReference>
<dbReference type="GO" id="GO:0001228">
    <property type="term" value="F:DNA-binding transcription activator activity, RNA polymerase II-specific"/>
    <property type="evidence" value="ECO:0000314"/>
    <property type="project" value="NTNU_SB"/>
</dbReference>
<dbReference type="GO" id="GO:0070888">
    <property type="term" value="F:E-box binding"/>
    <property type="evidence" value="ECO:0000314"/>
    <property type="project" value="UniProtKB"/>
</dbReference>
<dbReference type="GO" id="GO:0046983">
    <property type="term" value="F:protein dimerization activity"/>
    <property type="evidence" value="ECO:0007669"/>
    <property type="project" value="InterPro"/>
</dbReference>
<dbReference type="GO" id="GO:0000978">
    <property type="term" value="F:RNA polymerase II cis-regulatory region sequence-specific DNA binding"/>
    <property type="evidence" value="ECO:0000314"/>
    <property type="project" value="NTNU_SB"/>
</dbReference>
<dbReference type="GO" id="GO:0043565">
    <property type="term" value="F:sequence-specific DNA binding"/>
    <property type="evidence" value="ECO:0000314"/>
    <property type="project" value="UniProtKB"/>
</dbReference>
<dbReference type="GO" id="GO:0030509">
    <property type="term" value="P:BMP signaling pathway"/>
    <property type="evidence" value="ECO:0000315"/>
    <property type="project" value="UniProtKB"/>
</dbReference>
<dbReference type="GO" id="GO:0051216">
    <property type="term" value="P:cartilage development"/>
    <property type="evidence" value="ECO:0000303"/>
    <property type="project" value="UniProtKB"/>
</dbReference>
<dbReference type="GO" id="GO:0030154">
    <property type="term" value="P:cell differentiation"/>
    <property type="evidence" value="ECO:0000315"/>
    <property type="project" value="UniProtKB"/>
</dbReference>
<dbReference type="GO" id="GO:0071773">
    <property type="term" value="P:cellular response to BMP stimulus"/>
    <property type="evidence" value="ECO:0000270"/>
    <property type="project" value="UniProtKB"/>
</dbReference>
<dbReference type="GO" id="GO:0071320">
    <property type="term" value="P:cellular response to cAMP"/>
    <property type="evidence" value="ECO:0007669"/>
    <property type="project" value="Ensembl"/>
</dbReference>
<dbReference type="GO" id="GO:0071372">
    <property type="term" value="P:cellular response to follicle-stimulating hormone stimulus"/>
    <property type="evidence" value="ECO:0007669"/>
    <property type="project" value="Ensembl"/>
</dbReference>
<dbReference type="GO" id="GO:0071260">
    <property type="term" value="P:cellular response to mechanical stimulus"/>
    <property type="evidence" value="ECO:0000270"/>
    <property type="project" value="UniProtKB"/>
</dbReference>
<dbReference type="GO" id="GO:0071560">
    <property type="term" value="P:cellular response to transforming growth factor beta stimulus"/>
    <property type="evidence" value="ECO:0000270"/>
    <property type="project" value="UniProtKB"/>
</dbReference>
<dbReference type="GO" id="GO:0002062">
    <property type="term" value="P:chondrocyte differentiation"/>
    <property type="evidence" value="ECO:0000315"/>
    <property type="project" value="UniProtKB"/>
</dbReference>
<dbReference type="GO" id="GO:0030199">
    <property type="term" value="P:collagen fibril organization"/>
    <property type="evidence" value="ECO:0000315"/>
    <property type="project" value="UniProtKB"/>
</dbReference>
<dbReference type="GO" id="GO:0035993">
    <property type="term" value="P:deltoid tuberosity development"/>
    <property type="evidence" value="ECO:0000315"/>
    <property type="project" value="UniProtKB"/>
</dbReference>
<dbReference type="GO" id="GO:0006351">
    <property type="term" value="P:DNA-templated transcription"/>
    <property type="evidence" value="ECO:0000314"/>
    <property type="project" value="UniProtKB"/>
</dbReference>
<dbReference type="GO" id="GO:0048706">
    <property type="term" value="P:embryonic skeletal system development"/>
    <property type="evidence" value="ECO:0000270"/>
    <property type="project" value="UniProtKB"/>
</dbReference>
<dbReference type="GO" id="GO:0001958">
    <property type="term" value="P:endochondral ossification"/>
    <property type="evidence" value="ECO:0000315"/>
    <property type="project" value="UniProtKB"/>
</dbReference>
<dbReference type="GO" id="GO:0060325">
    <property type="term" value="P:face morphogenesis"/>
    <property type="evidence" value="ECO:0000270"/>
    <property type="project" value="UniProtKB"/>
</dbReference>
<dbReference type="GO" id="GO:0003188">
    <property type="term" value="P:heart valve formation"/>
    <property type="evidence" value="ECO:0000315"/>
    <property type="project" value="UniProtKB"/>
</dbReference>
<dbReference type="GO" id="GO:0003179">
    <property type="term" value="P:heart valve morphogenesis"/>
    <property type="evidence" value="ECO:0000315"/>
    <property type="project" value="UniProtKB"/>
</dbReference>
<dbReference type="GO" id="GO:0001707">
    <property type="term" value="P:mesoderm formation"/>
    <property type="evidence" value="ECO:0000315"/>
    <property type="project" value="UniProtKB"/>
</dbReference>
<dbReference type="GO" id="GO:0043066">
    <property type="term" value="P:negative regulation of apoptotic process"/>
    <property type="evidence" value="ECO:0000315"/>
    <property type="project" value="UniProtKB"/>
</dbReference>
<dbReference type="GO" id="GO:0045892">
    <property type="term" value="P:negative regulation of DNA-templated transcription"/>
    <property type="evidence" value="ECO:0000315"/>
    <property type="project" value="UniProtKB"/>
</dbReference>
<dbReference type="GO" id="GO:0010629">
    <property type="term" value="P:negative regulation of gene expression"/>
    <property type="evidence" value="ECO:0007669"/>
    <property type="project" value="Ensembl"/>
</dbReference>
<dbReference type="GO" id="GO:0061036">
    <property type="term" value="P:positive regulation of cartilage development"/>
    <property type="evidence" value="ECO:0000315"/>
    <property type="project" value="UniProtKB"/>
</dbReference>
<dbReference type="GO" id="GO:0008284">
    <property type="term" value="P:positive regulation of cell population proliferation"/>
    <property type="evidence" value="ECO:0000315"/>
    <property type="project" value="UniProtKB"/>
</dbReference>
<dbReference type="GO" id="GO:0032967">
    <property type="term" value="P:positive regulation of collagen biosynthetic process"/>
    <property type="evidence" value="ECO:0000314"/>
    <property type="project" value="UniProtKB"/>
</dbReference>
<dbReference type="GO" id="GO:0045893">
    <property type="term" value="P:positive regulation of DNA-templated transcription"/>
    <property type="evidence" value="ECO:0000314"/>
    <property type="project" value="UniProtKB"/>
</dbReference>
<dbReference type="GO" id="GO:2000543">
    <property type="term" value="P:positive regulation of gastrulation"/>
    <property type="evidence" value="ECO:0000315"/>
    <property type="project" value="UniProtKB"/>
</dbReference>
<dbReference type="GO" id="GO:0010628">
    <property type="term" value="P:positive regulation of gene expression"/>
    <property type="evidence" value="ECO:0000314"/>
    <property type="project" value="UniProtKB"/>
</dbReference>
<dbReference type="GO" id="GO:0045944">
    <property type="term" value="P:positive regulation of transcription by RNA polymerase II"/>
    <property type="evidence" value="ECO:0000314"/>
    <property type="project" value="UniProtKB"/>
</dbReference>
<dbReference type="GO" id="GO:0061035">
    <property type="term" value="P:regulation of cartilage development"/>
    <property type="evidence" value="ECO:0000315"/>
    <property type="project" value="UniProtKB"/>
</dbReference>
<dbReference type="GO" id="GO:0061056">
    <property type="term" value="P:sclerotome development"/>
    <property type="evidence" value="ECO:0000270"/>
    <property type="project" value="UniProtKB"/>
</dbReference>
<dbReference type="GO" id="GO:0060009">
    <property type="term" value="P:Sertoli cell development"/>
    <property type="evidence" value="ECO:0007669"/>
    <property type="project" value="Ensembl"/>
</dbReference>
<dbReference type="GO" id="GO:0060008">
    <property type="term" value="P:Sertoli cell differentiation"/>
    <property type="evidence" value="ECO:0000250"/>
    <property type="project" value="UniProtKB"/>
</dbReference>
<dbReference type="GO" id="GO:0035914">
    <property type="term" value="P:skeletal muscle cell differentiation"/>
    <property type="evidence" value="ECO:0000315"/>
    <property type="project" value="MGI"/>
</dbReference>
<dbReference type="GO" id="GO:0035990">
    <property type="term" value="P:tendon cell differentiation"/>
    <property type="evidence" value="ECO:0000315"/>
    <property type="project" value="UniProtKB"/>
</dbReference>
<dbReference type="GO" id="GO:0035989">
    <property type="term" value="P:tendon development"/>
    <property type="evidence" value="ECO:0000315"/>
    <property type="project" value="UniProtKB"/>
</dbReference>
<dbReference type="GO" id="GO:0035992">
    <property type="term" value="P:tendon formation"/>
    <property type="evidence" value="ECO:0000315"/>
    <property type="project" value="UniProtKB"/>
</dbReference>
<dbReference type="GO" id="GO:0001894">
    <property type="term" value="P:tissue homeostasis"/>
    <property type="evidence" value="ECO:0000315"/>
    <property type="project" value="UniProtKB"/>
</dbReference>
<dbReference type="CDD" id="cd18951">
    <property type="entry name" value="bHLH_TS_scleraxis"/>
    <property type="match status" value="1"/>
</dbReference>
<dbReference type="FunFam" id="4.10.280.10:FF:000010">
    <property type="entry name" value="Scleraxis bHLH transcription factor"/>
    <property type="match status" value="1"/>
</dbReference>
<dbReference type="Gene3D" id="4.10.280.10">
    <property type="entry name" value="Helix-loop-helix DNA-binding domain"/>
    <property type="match status" value="1"/>
</dbReference>
<dbReference type="InterPro" id="IPR011598">
    <property type="entry name" value="bHLH_dom"/>
</dbReference>
<dbReference type="InterPro" id="IPR050283">
    <property type="entry name" value="E-box_TF_Regulators"/>
</dbReference>
<dbReference type="InterPro" id="IPR036638">
    <property type="entry name" value="HLH_DNA-bd_sf"/>
</dbReference>
<dbReference type="PANTHER" id="PTHR23349:SF5">
    <property type="entry name" value="BASIC HELIX-LOOP-HELIX TRANSCRIPTION FACTOR SCLERAXIS"/>
    <property type="match status" value="1"/>
</dbReference>
<dbReference type="PANTHER" id="PTHR23349">
    <property type="entry name" value="BASIC HELIX-LOOP-HELIX TRANSCRIPTION FACTOR, TWIST"/>
    <property type="match status" value="1"/>
</dbReference>
<dbReference type="Pfam" id="PF00010">
    <property type="entry name" value="HLH"/>
    <property type="match status" value="1"/>
</dbReference>
<dbReference type="SMART" id="SM00353">
    <property type="entry name" value="HLH"/>
    <property type="match status" value="1"/>
</dbReference>
<dbReference type="SUPFAM" id="SSF47459">
    <property type="entry name" value="HLH, helix-loop-helix DNA-binding domain"/>
    <property type="match status" value="1"/>
</dbReference>
<dbReference type="PROSITE" id="PS50888">
    <property type="entry name" value="BHLH"/>
    <property type="match status" value="1"/>
</dbReference>
<feature type="chain" id="PRO_0000127436" description="Basic helix-loop-helix transcription factor scleraxis">
    <location>
        <begin position="1"/>
        <end position="207"/>
    </location>
</feature>
<feature type="domain" description="bHLH" evidence="1">
    <location>
        <begin position="78"/>
        <end position="130"/>
    </location>
</feature>
<feature type="region of interest" description="Disordered" evidence="2">
    <location>
        <begin position="1"/>
        <end position="91"/>
    </location>
</feature>
<feature type="region of interest" description="Disordered" evidence="2">
    <location>
        <begin position="151"/>
        <end position="183"/>
    </location>
</feature>
<feature type="compositionally biased region" description="Basic and acidic residues" evidence="2">
    <location>
        <begin position="73"/>
        <end position="91"/>
    </location>
</feature>
<feature type="compositionally biased region" description="Pro residues" evidence="2">
    <location>
        <begin position="161"/>
        <end position="171"/>
    </location>
</feature>
<protein>
    <recommendedName>
        <fullName>Basic helix-loop-helix transcription factor scleraxis</fullName>
    </recommendedName>
</protein>
<gene>
    <name type="primary">Scx</name>
</gene>
<name>SCX_MOUSE</name>
<keyword id="KW-0010">Activator</keyword>
<keyword id="KW-0217">Developmental protein</keyword>
<keyword id="KW-0238">DNA-binding</keyword>
<keyword id="KW-0539">Nucleus</keyword>
<keyword id="KW-1185">Reference proteome</keyword>
<keyword id="KW-0804">Transcription</keyword>
<keyword id="KW-0805">Transcription regulation</keyword>
<sequence length="207" mass="22239">MSFAMLRSAPPPGRYLYPEVSPLSEDEDRGSESSGSDEKPCRVHAARCGLQGARRRAGGRRAAGSGPGPGGRPGREPRQRHTANARERDRTNSVNTAFTALRTLIPTEPADRKLSKIETLRLASSYISHLGNVLLVGEACGDGQPCHSGPAFFHSGRAGSPLPPPPPPPPLARDGGENTQPKQICTFCLSNQRKLSKDRDRKTAIRS</sequence>
<accession>Q64124</accession>